<accession>Q0HY04</accession>
<gene>
    <name evidence="1" type="primary">dapB</name>
    <name type="ordered locus">Shewmr7_1002</name>
</gene>
<keyword id="KW-0028">Amino-acid biosynthesis</keyword>
<keyword id="KW-0963">Cytoplasm</keyword>
<keyword id="KW-0220">Diaminopimelate biosynthesis</keyword>
<keyword id="KW-0457">Lysine biosynthesis</keyword>
<keyword id="KW-0520">NAD</keyword>
<keyword id="KW-0521">NADP</keyword>
<keyword id="KW-0560">Oxidoreductase</keyword>
<feature type="chain" id="PRO_1000008640" description="4-hydroxy-tetrahydrodipicolinate reductase">
    <location>
        <begin position="1"/>
        <end position="270"/>
    </location>
</feature>
<feature type="active site" description="Proton donor/acceptor" evidence="1">
    <location>
        <position position="158"/>
    </location>
</feature>
<feature type="active site" description="Proton donor" evidence="1">
    <location>
        <position position="162"/>
    </location>
</feature>
<feature type="binding site" evidence="1">
    <location>
        <begin position="11"/>
        <end position="16"/>
    </location>
    <ligand>
        <name>NAD(+)</name>
        <dbReference type="ChEBI" id="CHEBI:57540"/>
    </ligand>
</feature>
<feature type="binding site" evidence="1">
    <location>
        <position position="37"/>
    </location>
    <ligand>
        <name>NAD(+)</name>
        <dbReference type="ChEBI" id="CHEBI:57540"/>
    </ligand>
</feature>
<feature type="binding site" evidence="1">
    <location>
        <position position="38"/>
    </location>
    <ligand>
        <name>NADP(+)</name>
        <dbReference type="ChEBI" id="CHEBI:58349"/>
    </ligand>
</feature>
<feature type="binding site" evidence="1">
    <location>
        <begin position="101"/>
        <end position="103"/>
    </location>
    <ligand>
        <name>NAD(+)</name>
        <dbReference type="ChEBI" id="CHEBI:57540"/>
    </ligand>
</feature>
<feature type="binding site" evidence="1">
    <location>
        <begin position="125"/>
        <end position="128"/>
    </location>
    <ligand>
        <name>NAD(+)</name>
        <dbReference type="ChEBI" id="CHEBI:57540"/>
    </ligand>
</feature>
<feature type="binding site" evidence="1">
    <location>
        <position position="159"/>
    </location>
    <ligand>
        <name>(S)-2,3,4,5-tetrahydrodipicolinate</name>
        <dbReference type="ChEBI" id="CHEBI:16845"/>
    </ligand>
</feature>
<feature type="binding site" evidence="1">
    <location>
        <begin position="168"/>
        <end position="169"/>
    </location>
    <ligand>
        <name>(S)-2,3,4,5-tetrahydrodipicolinate</name>
        <dbReference type="ChEBI" id="CHEBI:16845"/>
    </ligand>
</feature>
<evidence type="ECO:0000255" key="1">
    <source>
        <dbReference type="HAMAP-Rule" id="MF_00102"/>
    </source>
</evidence>
<evidence type="ECO:0000305" key="2"/>
<sequence>MGGQVRVAIVGAGGRMGRTLIESAYHQEHIRLGAAIERPGSSLVGVDAGELAGVGKLNVLVMDSLDYATDDFDVLIDFTAPEASIVHLDWCVRHKKAMVIGTTGFNHAQKEQINAFAEQTPVVMAPNMSVGVNLMWKLLELAAEVMGDYTDIEIIEGHHRHKKDAPSGTALKMGEVIAKTLGRDLEKCAVYGREGITGERDRETIGFATVRAGDLVGEHTAMFADIGERLEITHKASSRMTFANGAMRAAHWLVEQKPGLYDMQQVLGLN</sequence>
<name>DAPB_SHESR</name>
<organism>
    <name type="scientific">Shewanella sp. (strain MR-7)</name>
    <dbReference type="NCBI Taxonomy" id="60481"/>
    <lineage>
        <taxon>Bacteria</taxon>
        <taxon>Pseudomonadati</taxon>
        <taxon>Pseudomonadota</taxon>
        <taxon>Gammaproteobacteria</taxon>
        <taxon>Alteromonadales</taxon>
        <taxon>Shewanellaceae</taxon>
        <taxon>Shewanella</taxon>
    </lineage>
</organism>
<dbReference type="EC" id="1.17.1.8" evidence="1"/>
<dbReference type="EMBL" id="CP000444">
    <property type="protein sequence ID" value="ABI42001.1"/>
    <property type="molecule type" value="Genomic_DNA"/>
</dbReference>
<dbReference type="SMR" id="Q0HY04"/>
<dbReference type="KEGG" id="shm:Shewmr7_1002"/>
<dbReference type="HOGENOM" id="CLU_047479_2_1_6"/>
<dbReference type="UniPathway" id="UPA00034">
    <property type="reaction ID" value="UER00018"/>
</dbReference>
<dbReference type="GO" id="GO:0005829">
    <property type="term" value="C:cytosol"/>
    <property type="evidence" value="ECO:0007669"/>
    <property type="project" value="TreeGrafter"/>
</dbReference>
<dbReference type="GO" id="GO:0008839">
    <property type="term" value="F:4-hydroxy-tetrahydrodipicolinate reductase"/>
    <property type="evidence" value="ECO:0007669"/>
    <property type="project" value="UniProtKB-EC"/>
</dbReference>
<dbReference type="GO" id="GO:0051287">
    <property type="term" value="F:NAD binding"/>
    <property type="evidence" value="ECO:0007669"/>
    <property type="project" value="UniProtKB-UniRule"/>
</dbReference>
<dbReference type="GO" id="GO:0050661">
    <property type="term" value="F:NADP binding"/>
    <property type="evidence" value="ECO:0007669"/>
    <property type="project" value="UniProtKB-UniRule"/>
</dbReference>
<dbReference type="GO" id="GO:0016726">
    <property type="term" value="F:oxidoreductase activity, acting on CH or CH2 groups, NAD or NADP as acceptor"/>
    <property type="evidence" value="ECO:0007669"/>
    <property type="project" value="UniProtKB-UniRule"/>
</dbReference>
<dbReference type="GO" id="GO:0019877">
    <property type="term" value="P:diaminopimelate biosynthetic process"/>
    <property type="evidence" value="ECO:0007669"/>
    <property type="project" value="UniProtKB-UniRule"/>
</dbReference>
<dbReference type="GO" id="GO:0009089">
    <property type="term" value="P:lysine biosynthetic process via diaminopimelate"/>
    <property type="evidence" value="ECO:0007669"/>
    <property type="project" value="UniProtKB-UniRule"/>
</dbReference>
<dbReference type="CDD" id="cd02274">
    <property type="entry name" value="DHDPR_N"/>
    <property type="match status" value="1"/>
</dbReference>
<dbReference type="FunFam" id="3.30.360.10:FF:000004">
    <property type="entry name" value="4-hydroxy-tetrahydrodipicolinate reductase"/>
    <property type="match status" value="1"/>
</dbReference>
<dbReference type="FunFam" id="3.40.50.720:FF:000048">
    <property type="entry name" value="4-hydroxy-tetrahydrodipicolinate reductase"/>
    <property type="match status" value="1"/>
</dbReference>
<dbReference type="Gene3D" id="3.30.360.10">
    <property type="entry name" value="Dihydrodipicolinate Reductase, domain 2"/>
    <property type="match status" value="1"/>
</dbReference>
<dbReference type="Gene3D" id="3.40.50.720">
    <property type="entry name" value="NAD(P)-binding Rossmann-like Domain"/>
    <property type="match status" value="1"/>
</dbReference>
<dbReference type="HAMAP" id="MF_00102">
    <property type="entry name" value="DapB"/>
    <property type="match status" value="1"/>
</dbReference>
<dbReference type="InterPro" id="IPR022663">
    <property type="entry name" value="DapB_C"/>
</dbReference>
<dbReference type="InterPro" id="IPR000846">
    <property type="entry name" value="DapB_N"/>
</dbReference>
<dbReference type="InterPro" id="IPR022664">
    <property type="entry name" value="DapB_N_CS"/>
</dbReference>
<dbReference type="InterPro" id="IPR023940">
    <property type="entry name" value="DHDPR_bac"/>
</dbReference>
<dbReference type="InterPro" id="IPR036291">
    <property type="entry name" value="NAD(P)-bd_dom_sf"/>
</dbReference>
<dbReference type="NCBIfam" id="TIGR00036">
    <property type="entry name" value="dapB"/>
    <property type="match status" value="1"/>
</dbReference>
<dbReference type="PANTHER" id="PTHR20836:SF0">
    <property type="entry name" value="4-HYDROXY-TETRAHYDRODIPICOLINATE REDUCTASE 1, CHLOROPLASTIC-RELATED"/>
    <property type="match status" value="1"/>
</dbReference>
<dbReference type="PANTHER" id="PTHR20836">
    <property type="entry name" value="DIHYDRODIPICOLINATE REDUCTASE"/>
    <property type="match status" value="1"/>
</dbReference>
<dbReference type="Pfam" id="PF05173">
    <property type="entry name" value="DapB_C"/>
    <property type="match status" value="1"/>
</dbReference>
<dbReference type="Pfam" id="PF01113">
    <property type="entry name" value="DapB_N"/>
    <property type="match status" value="1"/>
</dbReference>
<dbReference type="PIRSF" id="PIRSF000161">
    <property type="entry name" value="DHPR"/>
    <property type="match status" value="1"/>
</dbReference>
<dbReference type="SUPFAM" id="SSF55347">
    <property type="entry name" value="Glyceraldehyde-3-phosphate dehydrogenase-like, C-terminal domain"/>
    <property type="match status" value="1"/>
</dbReference>
<dbReference type="SUPFAM" id="SSF51735">
    <property type="entry name" value="NAD(P)-binding Rossmann-fold domains"/>
    <property type="match status" value="1"/>
</dbReference>
<dbReference type="PROSITE" id="PS01298">
    <property type="entry name" value="DAPB"/>
    <property type="match status" value="1"/>
</dbReference>
<protein>
    <recommendedName>
        <fullName evidence="1">4-hydroxy-tetrahydrodipicolinate reductase</fullName>
        <shortName evidence="1">HTPA reductase</shortName>
        <ecNumber evidence="1">1.17.1.8</ecNumber>
    </recommendedName>
</protein>
<comment type="function">
    <text evidence="1">Catalyzes the conversion of 4-hydroxy-tetrahydrodipicolinate (HTPA) to tetrahydrodipicolinate.</text>
</comment>
<comment type="catalytic activity">
    <reaction evidence="1">
        <text>(S)-2,3,4,5-tetrahydrodipicolinate + NAD(+) + H2O = (2S,4S)-4-hydroxy-2,3,4,5-tetrahydrodipicolinate + NADH + H(+)</text>
        <dbReference type="Rhea" id="RHEA:35323"/>
        <dbReference type="ChEBI" id="CHEBI:15377"/>
        <dbReference type="ChEBI" id="CHEBI:15378"/>
        <dbReference type="ChEBI" id="CHEBI:16845"/>
        <dbReference type="ChEBI" id="CHEBI:57540"/>
        <dbReference type="ChEBI" id="CHEBI:57945"/>
        <dbReference type="ChEBI" id="CHEBI:67139"/>
        <dbReference type="EC" id="1.17.1.8"/>
    </reaction>
</comment>
<comment type="catalytic activity">
    <reaction evidence="1">
        <text>(S)-2,3,4,5-tetrahydrodipicolinate + NADP(+) + H2O = (2S,4S)-4-hydroxy-2,3,4,5-tetrahydrodipicolinate + NADPH + H(+)</text>
        <dbReference type="Rhea" id="RHEA:35331"/>
        <dbReference type="ChEBI" id="CHEBI:15377"/>
        <dbReference type="ChEBI" id="CHEBI:15378"/>
        <dbReference type="ChEBI" id="CHEBI:16845"/>
        <dbReference type="ChEBI" id="CHEBI:57783"/>
        <dbReference type="ChEBI" id="CHEBI:58349"/>
        <dbReference type="ChEBI" id="CHEBI:67139"/>
        <dbReference type="EC" id="1.17.1.8"/>
    </reaction>
</comment>
<comment type="pathway">
    <text evidence="1">Amino-acid biosynthesis; L-lysine biosynthesis via DAP pathway; (S)-tetrahydrodipicolinate from L-aspartate: step 4/4.</text>
</comment>
<comment type="subcellular location">
    <subcellularLocation>
        <location evidence="1">Cytoplasm</location>
    </subcellularLocation>
</comment>
<comment type="similarity">
    <text evidence="1">Belongs to the DapB family.</text>
</comment>
<comment type="caution">
    <text evidence="2">Was originally thought to be a dihydrodipicolinate reductase (DHDPR), catalyzing the conversion of dihydrodipicolinate to tetrahydrodipicolinate. However, it was shown in E.coli that the substrate of the enzymatic reaction is not dihydrodipicolinate (DHDP) but in fact (2S,4S)-4-hydroxy-2,3,4,5-tetrahydrodipicolinic acid (HTPA), the product released by the DapA-catalyzed reaction.</text>
</comment>
<proteinExistence type="inferred from homology"/>
<reference key="1">
    <citation type="submission" date="2006-08" db="EMBL/GenBank/DDBJ databases">
        <title>Complete sequence of chromosome 1 of Shewanella sp. MR-7.</title>
        <authorList>
            <person name="Copeland A."/>
            <person name="Lucas S."/>
            <person name="Lapidus A."/>
            <person name="Barry K."/>
            <person name="Detter J.C."/>
            <person name="Glavina del Rio T."/>
            <person name="Hammon N."/>
            <person name="Israni S."/>
            <person name="Dalin E."/>
            <person name="Tice H."/>
            <person name="Pitluck S."/>
            <person name="Kiss H."/>
            <person name="Brettin T."/>
            <person name="Bruce D."/>
            <person name="Han C."/>
            <person name="Tapia R."/>
            <person name="Gilna P."/>
            <person name="Schmutz J."/>
            <person name="Larimer F."/>
            <person name="Land M."/>
            <person name="Hauser L."/>
            <person name="Kyrpides N."/>
            <person name="Mikhailova N."/>
            <person name="Nealson K."/>
            <person name="Konstantinidis K."/>
            <person name="Klappenbach J."/>
            <person name="Tiedje J."/>
            <person name="Richardson P."/>
        </authorList>
    </citation>
    <scope>NUCLEOTIDE SEQUENCE [LARGE SCALE GENOMIC DNA]</scope>
    <source>
        <strain>MR-7</strain>
    </source>
</reference>